<dbReference type="EC" id="2.7.2.8" evidence="1"/>
<dbReference type="EMBL" id="AM849034">
    <property type="protein sequence ID" value="CAQ01349.1"/>
    <property type="status" value="ALT_INIT"/>
    <property type="molecule type" value="Genomic_DNA"/>
</dbReference>
<dbReference type="SMR" id="B0RHD2"/>
<dbReference type="STRING" id="31964.CMS1233"/>
<dbReference type="KEGG" id="cms:CMS1233"/>
<dbReference type="eggNOG" id="COG0548">
    <property type="taxonomic scope" value="Bacteria"/>
</dbReference>
<dbReference type="HOGENOM" id="CLU_053680_0_0_11"/>
<dbReference type="UniPathway" id="UPA00068">
    <property type="reaction ID" value="UER00107"/>
</dbReference>
<dbReference type="Proteomes" id="UP000001318">
    <property type="component" value="Chromosome"/>
</dbReference>
<dbReference type="GO" id="GO:0005737">
    <property type="term" value="C:cytoplasm"/>
    <property type="evidence" value="ECO:0007669"/>
    <property type="project" value="UniProtKB-SubCell"/>
</dbReference>
<dbReference type="GO" id="GO:0003991">
    <property type="term" value="F:acetylglutamate kinase activity"/>
    <property type="evidence" value="ECO:0007669"/>
    <property type="project" value="UniProtKB-UniRule"/>
</dbReference>
<dbReference type="GO" id="GO:0005524">
    <property type="term" value="F:ATP binding"/>
    <property type="evidence" value="ECO:0007669"/>
    <property type="project" value="UniProtKB-UniRule"/>
</dbReference>
<dbReference type="GO" id="GO:0042450">
    <property type="term" value="P:arginine biosynthetic process via ornithine"/>
    <property type="evidence" value="ECO:0007669"/>
    <property type="project" value="UniProtKB-UniRule"/>
</dbReference>
<dbReference type="GO" id="GO:0006526">
    <property type="term" value="P:L-arginine biosynthetic process"/>
    <property type="evidence" value="ECO:0007669"/>
    <property type="project" value="UniProtKB-UniPathway"/>
</dbReference>
<dbReference type="CDD" id="cd04250">
    <property type="entry name" value="AAK_NAGK-C"/>
    <property type="match status" value="1"/>
</dbReference>
<dbReference type="FunFam" id="3.40.1160.10:FF:000004">
    <property type="entry name" value="Acetylglutamate kinase"/>
    <property type="match status" value="1"/>
</dbReference>
<dbReference type="Gene3D" id="3.40.1160.10">
    <property type="entry name" value="Acetylglutamate kinase-like"/>
    <property type="match status" value="1"/>
</dbReference>
<dbReference type="HAMAP" id="MF_00082">
    <property type="entry name" value="ArgB"/>
    <property type="match status" value="1"/>
</dbReference>
<dbReference type="InterPro" id="IPR036393">
    <property type="entry name" value="AceGlu_kinase-like_sf"/>
</dbReference>
<dbReference type="InterPro" id="IPR004662">
    <property type="entry name" value="AcgluKinase_fam"/>
</dbReference>
<dbReference type="InterPro" id="IPR037528">
    <property type="entry name" value="ArgB"/>
</dbReference>
<dbReference type="InterPro" id="IPR001048">
    <property type="entry name" value="Asp/Glu/Uridylate_kinase"/>
</dbReference>
<dbReference type="InterPro" id="IPR001057">
    <property type="entry name" value="Glu/AcGlu_kinase"/>
</dbReference>
<dbReference type="InterPro" id="IPR041727">
    <property type="entry name" value="NAGK-C"/>
</dbReference>
<dbReference type="NCBIfam" id="TIGR00761">
    <property type="entry name" value="argB"/>
    <property type="match status" value="1"/>
</dbReference>
<dbReference type="PANTHER" id="PTHR23342">
    <property type="entry name" value="N-ACETYLGLUTAMATE SYNTHASE"/>
    <property type="match status" value="1"/>
</dbReference>
<dbReference type="PANTHER" id="PTHR23342:SF0">
    <property type="entry name" value="N-ACETYLGLUTAMATE SYNTHASE, MITOCHONDRIAL"/>
    <property type="match status" value="1"/>
</dbReference>
<dbReference type="Pfam" id="PF00696">
    <property type="entry name" value="AA_kinase"/>
    <property type="match status" value="1"/>
</dbReference>
<dbReference type="PIRSF" id="PIRSF000728">
    <property type="entry name" value="NAGK"/>
    <property type="match status" value="1"/>
</dbReference>
<dbReference type="PRINTS" id="PR00474">
    <property type="entry name" value="GLU5KINASE"/>
</dbReference>
<dbReference type="SUPFAM" id="SSF53633">
    <property type="entry name" value="Carbamate kinase-like"/>
    <property type="match status" value="1"/>
</dbReference>
<gene>
    <name evidence="1" type="primary">argB</name>
    <name type="ordered locus">CMS1233</name>
</gene>
<protein>
    <recommendedName>
        <fullName evidence="1">Acetylglutamate kinase</fullName>
        <ecNumber evidence="1">2.7.2.8</ecNumber>
    </recommendedName>
    <alternativeName>
        <fullName evidence="1">N-acetyl-L-glutamate 5-phosphotransferase</fullName>
    </alternativeName>
    <alternativeName>
        <fullName evidence="1">NAG kinase</fullName>
        <shortName evidence="1">NAGK</shortName>
    </alternativeName>
</protein>
<comment type="function">
    <text evidence="1">Catalyzes the ATP-dependent phosphorylation of N-acetyl-L-glutamate.</text>
</comment>
<comment type="catalytic activity">
    <reaction evidence="1">
        <text>N-acetyl-L-glutamate + ATP = N-acetyl-L-glutamyl 5-phosphate + ADP</text>
        <dbReference type="Rhea" id="RHEA:14629"/>
        <dbReference type="ChEBI" id="CHEBI:30616"/>
        <dbReference type="ChEBI" id="CHEBI:44337"/>
        <dbReference type="ChEBI" id="CHEBI:57936"/>
        <dbReference type="ChEBI" id="CHEBI:456216"/>
        <dbReference type="EC" id="2.7.2.8"/>
    </reaction>
</comment>
<comment type="pathway">
    <text evidence="1">Amino-acid biosynthesis; L-arginine biosynthesis; N(2)-acetyl-L-ornithine from L-glutamate: step 2/4.</text>
</comment>
<comment type="subcellular location">
    <subcellularLocation>
        <location evidence="1">Cytoplasm</location>
    </subcellularLocation>
</comment>
<comment type="similarity">
    <text evidence="1">Belongs to the acetylglutamate kinase family. ArgB subfamily.</text>
</comment>
<comment type="sequence caution" evidence="2">
    <conflict type="erroneous initiation">
        <sequence resource="EMBL-CDS" id="CAQ01349"/>
    </conflict>
</comment>
<evidence type="ECO:0000255" key="1">
    <source>
        <dbReference type="HAMAP-Rule" id="MF_00082"/>
    </source>
</evidence>
<evidence type="ECO:0000305" key="2"/>
<organism>
    <name type="scientific">Clavibacter sepedonicus</name>
    <name type="common">Clavibacter michiganensis subsp. sepedonicus</name>
    <dbReference type="NCBI Taxonomy" id="31964"/>
    <lineage>
        <taxon>Bacteria</taxon>
        <taxon>Bacillati</taxon>
        <taxon>Actinomycetota</taxon>
        <taxon>Actinomycetes</taxon>
        <taxon>Micrococcales</taxon>
        <taxon>Microbacteriaceae</taxon>
        <taxon>Clavibacter</taxon>
    </lineage>
</organism>
<keyword id="KW-0028">Amino-acid biosynthesis</keyword>
<keyword id="KW-0055">Arginine biosynthesis</keyword>
<keyword id="KW-0067">ATP-binding</keyword>
<keyword id="KW-0963">Cytoplasm</keyword>
<keyword id="KW-0418">Kinase</keyword>
<keyword id="KW-0547">Nucleotide-binding</keyword>
<keyword id="KW-0808">Transferase</keyword>
<sequence>MTAIAQQAADRDQAQAESKAAILIESLSWLQRFHDRIVVVKFGGNAMVDEELTRTFAEDVVYLRYAGLRPVVVHGGGPQISAMLTRLGIDSEFRGGYRVTTPEVLEVVRMVLTGQVSRDVVRGINAHGPLAAAVSGEDAGLFTGRRRGAVVDGVEVDLGLVGDVVSVDPTAVLAQLDAGRIPVVSSIAPDESDPAVSLNVNADAAAAALAVALGAEKLVILTDVAGLYRDWPDRGSLVSDIRADELRALLPSLESGMIPKMAACLEAVDGGVPKAAIIDGRIPHSMLLEIFTTNGIGTEVVPA</sequence>
<proteinExistence type="inferred from homology"/>
<reference key="1">
    <citation type="journal article" date="2008" name="J. Bacteriol.">
        <title>Genome of the actinomycete plant pathogen Clavibacter michiganensis subsp. sepedonicus suggests recent niche adaptation.</title>
        <authorList>
            <person name="Bentley S.D."/>
            <person name="Corton C."/>
            <person name="Brown S.E."/>
            <person name="Barron A."/>
            <person name="Clark L."/>
            <person name="Doggett J."/>
            <person name="Harris B."/>
            <person name="Ormond D."/>
            <person name="Quail M.A."/>
            <person name="May G."/>
            <person name="Francis D."/>
            <person name="Knudson D."/>
            <person name="Parkhill J."/>
            <person name="Ishimaru C.A."/>
        </authorList>
    </citation>
    <scope>NUCLEOTIDE SEQUENCE [LARGE SCALE GENOMIC DNA]</scope>
    <source>
        <strain>ATCC 33113 / DSM 20744 / JCM 9667 / LMG 2889 / ICMP 2535 / C-1</strain>
    </source>
</reference>
<name>ARGB_CLASE</name>
<feature type="chain" id="PRO_0000335620" description="Acetylglutamate kinase">
    <location>
        <begin position="1"/>
        <end position="303"/>
    </location>
</feature>
<feature type="binding site" evidence="1">
    <location>
        <begin position="76"/>
        <end position="77"/>
    </location>
    <ligand>
        <name>substrate</name>
    </ligand>
</feature>
<feature type="binding site" evidence="1">
    <location>
        <position position="98"/>
    </location>
    <ligand>
        <name>substrate</name>
    </ligand>
</feature>
<feature type="binding site" evidence="1">
    <location>
        <position position="199"/>
    </location>
    <ligand>
        <name>substrate</name>
    </ligand>
</feature>
<feature type="site" description="Transition state stabilizer" evidence="1">
    <location>
        <position position="41"/>
    </location>
</feature>
<feature type="site" description="Transition state stabilizer" evidence="1">
    <location>
        <position position="260"/>
    </location>
</feature>
<accession>B0RHD2</accession>